<comment type="similarity">
    <text evidence="1">Belongs to the UPF0371 family.</text>
</comment>
<dbReference type="EMBL" id="CP000726">
    <property type="protein sequence ID" value="ABS35657.1"/>
    <property type="molecule type" value="Genomic_DNA"/>
</dbReference>
<dbReference type="RefSeq" id="WP_011986081.1">
    <property type="nucleotide sequence ID" value="NC_009697.1"/>
</dbReference>
<dbReference type="SMR" id="A7FQY1"/>
<dbReference type="KEGG" id="cba:CLB_0371"/>
<dbReference type="HOGENOM" id="CLU_046981_0_0_9"/>
<dbReference type="Gene3D" id="1.20.1570.10">
    <property type="entry name" value="dip2346 domain like"/>
    <property type="match status" value="1"/>
</dbReference>
<dbReference type="Gene3D" id="3.10.630.10">
    <property type="entry name" value="dip2346 domain like"/>
    <property type="match status" value="1"/>
</dbReference>
<dbReference type="Gene3D" id="3.40.140.40">
    <property type="entry name" value="Domain of unknown function (DUF1846), C-terminal subdomain"/>
    <property type="match status" value="1"/>
</dbReference>
<dbReference type="HAMAP" id="MF_01567">
    <property type="entry name" value="UPF0371"/>
    <property type="match status" value="1"/>
</dbReference>
<dbReference type="InterPro" id="IPR014999">
    <property type="entry name" value="DUF1846"/>
</dbReference>
<dbReference type="InterPro" id="IPR048441">
    <property type="entry name" value="DUF1846_C"/>
</dbReference>
<dbReference type="InterPro" id="IPR048496">
    <property type="entry name" value="DUF1846_N"/>
</dbReference>
<dbReference type="NCBIfam" id="NF010184">
    <property type="entry name" value="PRK13663.1"/>
    <property type="match status" value="1"/>
</dbReference>
<dbReference type="Pfam" id="PF08903">
    <property type="entry name" value="DUF1846"/>
    <property type="match status" value="1"/>
</dbReference>
<dbReference type="Pfam" id="PF20921">
    <property type="entry name" value="DUF1846_C"/>
    <property type="match status" value="1"/>
</dbReference>
<dbReference type="PIRSF" id="PIRSF033132">
    <property type="entry name" value="DUF1846"/>
    <property type="match status" value="1"/>
</dbReference>
<evidence type="ECO:0000255" key="1">
    <source>
        <dbReference type="HAMAP-Rule" id="MF_01567"/>
    </source>
</evidence>
<reference key="1">
    <citation type="journal article" date="2007" name="PLoS ONE">
        <title>Analysis of the neurotoxin complex genes in Clostridium botulinum A1-A4 and B1 strains: BoNT/A3, /Ba4 and /B1 clusters are located within plasmids.</title>
        <authorList>
            <person name="Smith T.J."/>
            <person name="Hill K.K."/>
            <person name="Foley B.T."/>
            <person name="Detter J.C."/>
            <person name="Munk A.C."/>
            <person name="Bruce D.C."/>
            <person name="Doggett N.A."/>
            <person name="Smith L.A."/>
            <person name="Marks J.D."/>
            <person name="Xie G."/>
            <person name="Brettin T.S."/>
        </authorList>
    </citation>
    <scope>NUCLEOTIDE SEQUENCE [LARGE SCALE GENOMIC DNA]</scope>
    <source>
        <strain>ATCC 19397 / Type A</strain>
    </source>
</reference>
<sequence length="502" mass="56739">MRIGFDHEKYLEEQSKYILERVNNYDKLYLEFGGKLLFDLHAKRVLPGFDENAKIKLLHKLKEKVEIIICLYAGDIERNKIRGDFGITYDVDVLRLIDDLRGYDLEVNSVVITRYSGQPATNIFINKLERRGIKVYKHEATKGYPTDVDTIVSDEGYGKNPYIETTKPIVVVTAPGPGSGKLATCLSQLYHEYKRGNVAGYSKFETFPVWNVPLKHPLNIAYESATVDLKDVNMIDSFHFDAYNKVAVNYNRDIESFPVLKRIIEKITGEESVYKSPTDMGVNRVGFGIVDDEVVKEASKQEIIRRAFKTACEYKKGYVDKETFHRAKLIMEEMNLKEEDRKVVIPARKYAAKLKERANKSETCTVVALELEDGTILTGRSSELMDGTAAVILNAVKHYANISDEIHLISPVILEPIINLKVKTLGSKRTALSCEEVLIALSICAATNPTAQVAMCKLPMLKGCQAHSTTILSTNEEQTFRKLGIDVTCDPEYISESLYYNN</sequence>
<proteinExistence type="inferred from homology"/>
<name>Y371_CLOB1</name>
<protein>
    <recommendedName>
        <fullName evidence="1">UPF0371 protein CLB_0371</fullName>
    </recommendedName>
</protein>
<organism>
    <name type="scientific">Clostridium botulinum (strain ATCC 19397 / Type A)</name>
    <dbReference type="NCBI Taxonomy" id="441770"/>
    <lineage>
        <taxon>Bacteria</taxon>
        <taxon>Bacillati</taxon>
        <taxon>Bacillota</taxon>
        <taxon>Clostridia</taxon>
        <taxon>Eubacteriales</taxon>
        <taxon>Clostridiaceae</taxon>
        <taxon>Clostridium</taxon>
    </lineage>
</organism>
<accession>A7FQY1</accession>
<feature type="chain" id="PRO_1000069093" description="UPF0371 protein CLB_0371">
    <location>
        <begin position="1"/>
        <end position="502"/>
    </location>
</feature>
<gene>
    <name type="ordered locus">CLB_0371</name>
</gene>